<keyword id="KW-0963">Cytoplasm</keyword>
<keyword id="KW-0344">Guanine-nucleotide releasing factor</keyword>
<keyword id="KW-0472">Membrane</keyword>
<keyword id="KW-0653">Protein transport</keyword>
<keyword id="KW-1185">Reference proteome</keyword>
<keyword id="KW-0813">Transport</keyword>
<protein>
    <recommendedName>
        <fullName>Brefeldin A-inhibited guanine nucleotide-exchange protein 1</fullName>
        <shortName>BIG1</shortName>
    </recommendedName>
    <alternativeName>
        <fullName>ARF guanine-nucleotide exchange factor BIG1</fullName>
    </alternativeName>
</protein>
<comment type="function">
    <text evidence="1">Activates the ARF proteins by exchanging bound GDP for free GTP. Plays a role in vesicular protein sorting (By similarity).</text>
</comment>
<comment type="activity regulation">
    <text evidence="1">Inhibited by brefeldin A.</text>
</comment>
<comment type="subunit">
    <text evidence="1">Homodimer.</text>
</comment>
<comment type="subcellular location">
    <subcellularLocation>
        <location evidence="1">Cytoplasm</location>
        <location evidence="1">Cytosol</location>
    </subcellularLocation>
    <subcellularLocation>
        <location evidence="1">Membrane</location>
        <topology evidence="1">Peripheral membrane protein</topology>
        <orientation evidence="1">Cytoplasmic side</orientation>
    </subcellularLocation>
    <text evidence="1">Soluble and partially membrane-bound.</text>
</comment>
<comment type="sequence caution" evidence="5">
    <conflict type="erroneous gene model prediction">
        <sequence resource="EMBL-CDS" id="CAB37560"/>
    </conflict>
</comment>
<comment type="sequence caution" evidence="5">
    <conflict type="erroneous gene model prediction">
        <sequence resource="EMBL-CDS" id="CAB80485"/>
    </conflict>
</comment>
<sequence length="1687" mass="187537">MSSSQNLGGATRCGRVIGPSLDKIIKNAAWRKHTFLVSACKSVLDKLEALSDSPDPSSPLFGLTTSDADAVLQPLLLSLDTGYAKVIEPALDCSFKLFSLSLLRGEVCSSSPDSLLYKLIHAICKVCGIGEESIELAVLRVLLAAVRSPRILIRGDCLLHLVRTCYNVYLGGFNGTNQICAKSVLAQIMLIVFTRSEANSMDASLKTVNVNDLLAITDKNVNEGNSVHICQGFINDVITAGEAAPPPDFALVQPPEEGASSTEDEGTGSKIREDGFLLFKNLCKLSMKFSSQENTDDQILVRGKTLSLELLKVIIDNGGPIWLSDERFLNAIKQLLCLSLLKNSALSVMSIFQLQCAIFTTLLRKYRSGMKSEVGIFFPMLVLRVLENVLQPSFVQKMTVLSLLENICHDPNLIIDIFVNFDCDVESPNIFERIVNGLLKTALGPPPGSSTILSPVQDITFRHESVKCLVSIIKAMGTWMDQQLSVGDSLLPKSLENEAPANNHSNSNEEDGTTIDHDFHPDLNPESSDAATLEQRRAYKIERQKGVTLFNRKPSKGIEFLISSKKVGNSPDEVVSFLRNTTGLNATMIGDYLGEREDFPMKVMHAYVDSFDFKEMNFGEAIRFFLRGFRLPGEAQKIDRIMEKFAERFCKCNPNSFSSADTAYVLAYSVIMLNTDAHNIMVKEKMTKADFIRNNRGIDDGKDLPEEYLGALYDQVVINEIKMSSDSSAPESRQSNGLNKLLGLDGILNLVYWTQTEEKAVGANGLLIKDIQEKFRSKSGKSESAYHVVTDVAILRFMVEVSWGPMLAAFSVTLDQSDDRLAAVECLRGFRYAVHVTAVMGMQTQRDAFVTSMAKFTNLHCAGDMKQKNVDAVKAIISIAIEDGNHLQDAWEHILTCLSRIEHLQLLGEGAPSDASYFASTETEEKKALGFPNLKKKGALQNPVMMAVVRGGSYDSSTIGPNMPGLVKQDQINNFIANLNLLDQIGSFQLNNVYAHSQRLKTEAIVAFVKALCKVSMSELQSPTDPRVFSLTKLVEIAHYNMNRIRLVWSRIWSILSDFFVSVGLSENLSVAIFVMDSLRQLSMKFLEREELANYNFQNEFLRPFVIVMQKSSSAEIRELIVRCISQMVLSRVSNVKSGWKSVFKVFTTAAADERKNIVLLAFETMEKIVREYFSYITETEATTFTDCVRCLITFTNSTFTSDVSLNAIAFLRFCALKLADGGLVWNEKGRSSSPSTPVTDDHSPSTQNFMDADENISYWVPLLTGLSKLTSDSRSAIRKSSLEVLFNILKDHGHIFSRTFWIGVFSSVIYPIFNSVWGENDLLSKDEHSSFPSTFSSHPSEVSWDAETSAMAAQYLVDLFVSFFTVIRSQLSSVVSLLAGLIRSPAQGPTVAGVGALLRLADELGDRFSENEWKEIFLAVNEAASLTLSSFMKTLRTMDDIPDEDTLSDQDFSNEDDIDEDSLQTMSYVVARTKSHITVQLQVVQVVTDLYRIHQQSLLASHVTVILEILSSISSHAHQLNSDLILQKKVRRACSILELSEPPMLHFENDTFQNYLDILQAIVTNNPGVSLELNVESQLMTVCMQILKMYLKCTLFQGDELEETRQPKNWILPMGAASKEEAAARSPLVVAVLKALRELKRDSFKRYAPNFFPLLVELVRSEHSSSQVPQVLSTVFHTCMGAMMDE</sequence>
<dbReference type="EMBL" id="AL035538">
    <property type="protein sequence ID" value="CAB37560.1"/>
    <property type="status" value="ALT_SEQ"/>
    <property type="molecule type" value="Genomic_DNA"/>
</dbReference>
<dbReference type="EMBL" id="AL161593">
    <property type="protein sequence ID" value="CAB80485.1"/>
    <property type="status" value="ALT_SEQ"/>
    <property type="molecule type" value="Genomic_DNA"/>
</dbReference>
<dbReference type="EMBL" id="CP002687">
    <property type="protein sequence ID" value="AEE86892.1"/>
    <property type="molecule type" value="Genomic_DNA"/>
</dbReference>
<dbReference type="EMBL" id="AK227209">
    <property type="protein sequence ID" value="BAE99247.1"/>
    <property type="molecule type" value="mRNA"/>
</dbReference>
<dbReference type="PIR" id="T05647">
    <property type="entry name" value="T05647"/>
</dbReference>
<dbReference type="RefSeq" id="NP_195533.2">
    <property type="nucleotide sequence ID" value="NM_119981.4"/>
</dbReference>
<dbReference type="SMR" id="F4JSZ5"/>
<dbReference type="FunCoup" id="F4JSZ5">
    <property type="interactions" value="4927"/>
</dbReference>
<dbReference type="STRING" id="3702.F4JSZ5"/>
<dbReference type="GlyGen" id="F4JSZ5">
    <property type="glycosylation" value="1 site"/>
</dbReference>
<dbReference type="PaxDb" id="3702-AT4G38200.1"/>
<dbReference type="ProteomicsDB" id="240344"/>
<dbReference type="EnsemblPlants" id="AT4G38200.1">
    <property type="protein sequence ID" value="AT4G38200.1"/>
    <property type="gene ID" value="AT4G38200"/>
</dbReference>
<dbReference type="GeneID" id="829976"/>
<dbReference type="Gramene" id="AT4G38200.1">
    <property type="protein sequence ID" value="AT4G38200.1"/>
    <property type="gene ID" value="AT4G38200"/>
</dbReference>
<dbReference type="KEGG" id="ath:AT4G38200"/>
<dbReference type="Araport" id="AT4G38200"/>
<dbReference type="TAIR" id="AT4G38200">
    <property type="gene designation" value="BIG1"/>
</dbReference>
<dbReference type="eggNOG" id="KOG0929">
    <property type="taxonomic scope" value="Eukaryota"/>
</dbReference>
<dbReference type="HOGENOM" id="CLU_000691_0_0_1"/>
<dbReference type="InParanoid" id="F4JSZ5"/>
<dbReference type="OMA" id="FWKSNEM"/>
<dbReference type="PRO" id="PR:F4JSZ5"/>
<dbReference type="Proteomes" id="UP000006548">
    <property type="component" value="Chromosome 4"/>
</dbReference>
<dbReference type="ExpressionAtlas" id="F4JSZ5">
    <property type="expression patterns" value="baseline and differential"/>
</dbReference>
<dbReference type="GO" id="GO:0009507">
    <property type="term" value="C:chloroplast"/>
    <property type="evidence" value="ECO:0007005"/>
    <property type="project" value="TAIR"/>
</dbReference>
<dbReference type="GO" id="GO:0005829">
    <property type="term" value="C:cytosol"/>
    <property type="evidence" value="ECO:0007669"/>
    <property type="project" value="UniProtKB-SubCell"/>
</dbReference>
<dbReference type="GO" id="GO:0016020">
    <property type="term" value="C:membrane"/>
    <property type="evidence" value="ECO:0007669"/>
    <property type="project" value="UniProtKB-SubCell"/>
</dbReference>
<dbReference type="GO" id="GO:0005085">
    <property type="term" value="F:guanyl-nucleotide exchange factor activity"/>
    <property type="evidence" value="ECO:0007669"/>
    <property type="project" value="UniProtKB-KW"/>
</dbReference>
<dbReference type="GO" id="GO:0015031">
    <property type="term" value="P:protein transport"/>
    <property type="evidence" value="ECO:0007669"/>
    <property type="project" value="UniProtKB-KW"/>
</dbReference>
<dbReference type="GO" id="GO:0032012">
    <property type="term" value="P:regulation of ARF protein signal transduction"/>
    <property type="evidence" value="ECO:0007669"/>
    <property type="project" value="InterPro"/>
</dbReference>
<dbReference type="CDD" id="cd00171">
    <property type="entry name" value="Sec7"/>
    <property type="match status" value="1"/>
</dbReference>
<dbReference type="FunFam" id="1.10.1000.11:FF:000005">
    <property type="entry name" value="Brefeldin A-inhibited guanine nucleotide-exchange 1"/>
    <property type="match status" value="1"/>
</dbReference>
<dbReference type="FunFam" id="1.10.220.20:FF:000002">
    <property type="entry name" value="Brefeldin A-inhibited guanine nucleotide-exchange protein 1"/>
    <property type="match status" value="1"/>
</dbReference>
<dbReference type="Gene3D" id="1.10.220.20">
    <property type="match status" value="1"/>
</dbReference>
<dbReference type="Gene3D" id="1.10.1000.11">
    <property type="entry name" value="Arf Nucleotide-binding Site Opener,domain 2"/>
    <property type="match status" value="1"/>
</dbReference>
<dbReference type="Gene3D" id="1.25.10.10">
    <property type="entry name" value="Leucine-rich Repeat Variant"/>
    <property type="match status" value="1"/>
</dbReference>
<dbReference type="InterPro" id="IPR011989">
    <property type="entry name" value="ARM-like"/>
</dbReference>
<dbReference type="InterPro" id="IPR016024">
    <property type="entry name" value="ARM-type_fold"/>
</dbReference>
<dbReference type="InterPro" id="IPR032629">
    <property type="entry name" value="DCB_dom"/>
</dbReference>
<dbReference type="InterPro" id="IPR015403">
    <property type="entry name" value="Mon2/Sec7/BIG1-like_HDS"/>
</dbReference>
<dbReference type="InterPro" id="IPR032691">
    <property type="entry name" value="Mon2/Sec7/BIG1-like_HUS"/>
</dbReference>
<dbReference type="InterPro" id="IPR046455">
    <property type="entry name" value="Sec7/BIG1-like_C"/>
</dbReference>
<dbReference type="InterPro" id="IPR023394">
    <property type="entry name" value="Sec7_C_sf"/>
</dbReference>
<dbReference type="InterPro" id="IPR000904">
    <property type="entry name" value="Sec7_dom"/>
</dbReference>
<dbReference type="InterPro" id="IPR035999">
    <property type="entry name" value="Sec7_dom_sf"/>
</dbReference>
<dbReference type="PANTHER" id="PTHR10663:SF108">
    <property type="entry name" value="BREFELDIN A-INHIBITED GUANINE NUCLEOTIDE-EXCHANGE PROTEIN 1"/>
    <property type="match status" value="1"/>
</dbReference>
<dbReference type="PANTHER" id="PTHR10663">
    <property type="entry name" value="GUANYL-NUCLEOTIDE EXCHANGE FACTOR"/>
    <property type="match status" value="1"/>
</dbReference>
<dbReference type="Pfam" id="PF20252">
    <property type="entry name" value="BIG2_C"/>
    <property type="match status" value="1"/>
</dbReference>
<dbReference type="Pfam" id="PF16213">
    <property type="entry name" value="DCB"/>
    <property type="match status" value="1"/>
</dbReference>
<dbReference type="Pfam" id="PF01369">
    <property type="entry name" value="Sec7"/>
    <property type="match status" value="1"/>
</dbReference>
<dbReference type="Pfam" id="PF09324">
    <property type="entry name" value="Sec7-like_HDS"/>
    <property type="match status" value="1"/>
</dbReference>
<dbReference type="Pfam" id="PF12783">
    <property type="entry name" value="Sec7-like_HUS"/>
    <property type="match status" value="1"/>
</dbReference>
<dbReference type="SMART" id="SM00222">
    <property type="entry name" value="Sec7"/>
    <property type="match status" value="1"/>
</dbReference>
<dbReference type="SUPFAM" id="SSF48371">
    <property type="entry name" value="ARM repeat"/>
    <property type="match status" value="1"/>
</dbReference>
<dbReference type="SUPFAM" id="SSF48425">
    <property type="entry name" value="Sec7 domain"/>
    <property type="match status" value="1"/>
</dbReference>
<dbReference type="PROSITE" id="PS50190">
    <property type="entry name" value="SEC7"/>
    <property type="match status" value="1"/>
</dbReference>
<proteinExistence type="evidence at transcript level"/>
<reference key="1">
    <citation type="journal article" date="1999" name="Nature">
        <title>Sequence and analysis of chromosome 4 of the plant Arabidopsis thaliana.</title>
        <authorList>
            <person name="Mayer K.F.X."/>
            <person name="Schueller C."/>
            <person name="Wambutt R."/>
            <person name="Murphy G."/>
            <person name="Volckaert G."/>
            <person name="Pohl T."/>
            <person name="Duesterhoeft A."/>
            <person name="Stiekema W."/>
            <person name="Entian K.-D."/>
            <person name="Terryn N."/>
            <person name="Harris B."/>
            <person name="Ansorge W."/>
            <person name="Brandt P."/>
            <person name="Grivell L.A."/>
            <person name="Rieger M."/>
            <person name="Weichselgartner M."/>
            <person name="de Simone V."/>
            <person name="Obermaier B."/>
            <person name="Mache R."/>
            <person name="Mueller M."/>
            <person name="Kreis M."/>
            <person name="Delseny M."/>
            <person name="Puigdomenech P."/>
            <person name="Watson M."/>
            <person name="Schmidtheini T."/>
            <person name="Reichert B."/>
            <person name="Portetelle D."/>
            <person name="Perez-Alonso M."/>
            <person name="Boutry M."/>
            <person name="Bancroft I."/>
            <person name="Vos P."/>
            <person name="Hoheisel J."/>
            <person name="Zimmermann W."/>
            <person name="Wedler H."/>
            <person name="Ridley P."/>
            <person name="Langham S.-A."/>
            <person name="McCullagh B."/>
            <person name="Bilham L."/>
            <person name="Robben J."/>
            <person name="van der Schueren J."/>
            <person name="Grymonprez B."/>
            <person name="Chuang Y.-J."/>
            <person name="Vandenbussche F."/>
            <person name="Braeken M."/>
            <person name="Weltjens I."/>
            <person name="Voet M."/>
            <person name="Bastiaens I."/>
            <person name="Aert R."/>
            <person name="Defoor E."/>
            <person name="Weitzenegger T."/>
            <person name="Bothe G."/>
            <person name="Ramsperger U."/>
            <person name="Hilbert H."/>
            <person name="Braun M."/>
            <person name="Holzer E."/>
            <person name="Brandt A."/>
            <person name="Peters S."/>
            <person name="van Staveren M."/>
            <person name="Dirkse W."/>
            <person name="Mooijman P."/>
            <person name="Klein Lankhorst R."/>
            <person name="Rose M."/>
            <person name="Hauf J."/>
            <person name="Koetter P."/>
            <person name="Berneiser S."/>
            <person name="Hempel S."/>
            <person name="Feldpausch M."/>
            <person name="Lamberth S."/>
            <person name="Van den Daele H."/>
            <person name="De Keyser A."/>
            <person name="Buysshaert C."/>
            <person name="Gielen J."/>
            <person name="Villarroel R."/>
            <person name="De Clercq R."/>
            <person name="van Montagu M."/>
            <person name="Rogers J."/>
            <person name="Cronin A."/>
            <person name="Quail M.A."/>
            <person name="Bray-Allen S."/>
            <person name="Clark L."/>
            <person name="Doggett J."/>
            <person name="Hall S."/>
            <person name="Kay M."/>
            <person name="Lennard N."/>
            <person name="McLay K."/>
            <person name="Mayes R."/>
            <person name="Pettett A."/>
            <person name="Rajandream M.A."/>
            <person name="Lyne M."/>
            <person name="Benes V."/>
            <person name="Rechmann S."/>
            <person name="Borkova D."/>
            <person name="Bloecker H."/>
            <person name="Scharfe M."/>
            <person name="Grimm M."/>
            <person name="Loehnert T.-H."/>
            <person name="Dose S."/>
            <person name="de Haan M."/>
            <person name="Maarse A.C."/>
            <person name="Schaefer M."/>
            <person name="Mueller-Auer S."/>
            <person name="Gabel C."/>
            <person name="Fuchs M."/>
            <person name="Fartmann B."/>
            <person name="Granderath K."/>
            <person name="Dauner D."/>
            <person name="Herzl A."/>
            <person name="Neumann S."/>
            <person name="Argiriou A."/>
            <person name="Vitale D."/>
            <person name="Liguori R."/>
            <person name="Piravandi E."/>
            <person name="Massenet O."/>
            <person name="Quigley F."/>
            <person name="Clabauld G."/>
            <person name="Muendlein A."/>
            <person name="Felber R."/>
            <person name="Schnabl S."/>
            <person name="Hiller R."/>
            <person name="Schmidt W."/>
            <person name="Lecharny A."/>
            <person name="Aubourg S."/>
            <person name="Chefdor F."/>
            <person name="Cooke R."/>
            <person name="Berger C."/>
            <person name="Monfort A."/>
            <person name="Casacuberta E."/>
            <person name="Gibbons T."/>
            <person name="Weber N."/>
            <person name="Vandenbol M."/>
            <person name="Bargues M."/>
            <person name="Terol J."/>
            <person name="Torres A."/>
            <person name="Perez-Perez A."/>
            <person name="Purnelle B."/>
            <person name="Bent E."/>
            <person name="Johnson S."/>
            <person name="Tacon D."/>
            <person name="Jesse T."/>
            <person name="Heijnen L."/>
            <person name="Schwarz S."/>
            <person name="Scholler P."/>
            <person name="Heber S."/>
            <person name="Francs P."/>
            <person name="Bielke C."/>
            <person name="Frishman D."/>
            <person name="Haase D."/>
            <person name="Lemcke K."/>
            <person name="Mewes H.-W."/>
            <person name="Stocker S."/>
            <person name="Zaccaria P."/>
            <person name="Bevan M."/>
            <person name="Wilson R.K."/>
            <person name="de la Bastide M."/>
            <person name="Habermann K."/>
            <person name="Parnell L."/>
            <person name="Dedhia N."/>
            <person name="Gnoj L."/>
            <person name="Schutz K."/>
            <person name="Huang E."/>
            <person name="Spiegel L."/>
            <person name="Sekhon M."/>
            <person name="Murray J."/>
            <person name="Sheet P."/>
            <person name="Cordes M."/>
            <person name="Abu-Threideh J."/>
            <person name="Stoneking T."/>
            <person name="Kalicki J."/>
            <person name="Graves T."/>
            <person name="Harmon G."/>
            <person name="Edwards J."/>
            <person name="Latreille P."/>
            <person name="Courtney L."/>
            <person name="Cloud J."/>
            <person name="Abbott A."/>
            <person name="Scott K."/>
            <person name="Johnson D."/>
            <person name="Minx P."/>
            <person name="Bentley D."/>
            <person name="Fulton B."/>
            <person name="Miller N."/>
            <person name="Greco T."/>
            <person name="Kemp K."/>
            <person name="Kramer J."/>
            <person name="Fulton L."/>
            <person name="Mardis E."/>
            <person name="Dante M."/>
            <person name="Pepin K."/>
            <person name="Hillier L.W."/>
            <person name="Nelson J."/>
            <person name="Spieth J."/>
            <person name="Ryan E."/>
            <person name="Andrews S."/>
            <person name="Geisel C."/>
            <person name="Layman D."/>
            <person name="Du H."/>
            <person name="Ali J."/>
            <person name="Berghoff A."/>
            <person name="Jones K."/>
            <person name="Drone K."/>
            <person name="Cotton M."/>
            <person name="Joshu C."/>
            <person name="Antonoiu B."/>
            <person name="Zidanic M."/>
            <person name="Strong C."/>
            <person name="Sun H."/>
            <person name="Lamar B."/>
            <person name="Yordan C."/>
            <person name="Ma P."/>
            <person name="Zhong J."/>
            <person name="Preston R."/>
            <person name="Vil D."/>
            <person name="Shekher M."/>
            <person name="Matero A."/>
            <person name="Shah R."/>
            <person name="Swaby I.K."/>
            <person name="O'Shaughnessy A."/>
            <person name="Rodriguez M."/>
            <person name="Hoffman J."/>
            <person name="Till S."/>
            <person name="Granat S."/>
            <person name="Shohdy N."/>
            <person name="Hasegawa A."/>
            <person name="Hameed A."/>
            <person name="Lodhi M."/>
            <person name="Johnson A."/>
            <person name="Chen E."/>
            <person name="Marra M.A."/>
            <person name="Martienssen R."/>
            <person name="McCombie W.R."/>
        </authorList>
    </citation>
    <scope>NUCLEOTIDE SEQUENCE [LARGE SCALE GENOMIC DNA]</scope>
    <source>
        <strain>cv. Columbia</strain>
    </source>
</reference>
<reference key="2">
    <citation type="journal article" date="2017" name="Plant J.">
        <title>Araport11: a complete reannotation of the Arabidopsis thaliana reference genome.</title>
        <authorList>
            <person name="Cheng C.Y."/>
            <person name="Krishnakumar V."/>
            <person name="Chan A.P."/>
            <person name="Thibaud-Nissen F."/>
            <person name="Schobel S."/>
            <person name="Town C.D."/>
        </authorList>
    </citation>
    <scope>GENOME REANNOTATION</scope>
    <source>
        <strain>cv. Columbia</strain>
    </source>
</reference>
<reference key="3">
    <citation type="submission" date="2006-07" db="EMBL/GenBank/DDBJ databases">
        <title>Large-scale analysis of RIKEN Arabidopsis full-length (RAFL) cDNAs.</title>
        <authorList>
            <person name="Totoki Y."/>
            <person name="Seki M."/>
            <person name="Ishida J."/>
            <person name="Nakajima M."/>
            <person name="Enju A."/>
            <person name="Kamiya A."/>
            <person name="Narusaka M."/>
            <person name="Shin-i T."/>
            <person name="Nakagawa M."/>
            <person name="Sakamoto N."/>
            <person name="Oishi K."/>
            <person name="Kohara Y."/>
            <person name="Kobayashi M."/>
            <person name="Toyoda A."/>
            <person name="Sakaki Y."/>
            <person name="Sakurai T."/>
            <person name="Iida K."/>
            <person name="Akiyama K."/>
            <person name="Satou M."/>
            <person name="Toyoda T."/>
            <person name="Konagaya A."/>
            <person name="Carninci P."/>
            <person name="Kawai J."/>
            <person name="Hayashizaki Y."/>
            <person name="Shinozaki K."/>
        </authorList>
    </citation>
    <scope>NUCLEOTIDE SEQUENCE [LARGE SCALE MRNA] OF 897-1687</scope>
    <source>
        <strain>cv. Columbia</strain>
    </source>
</reference>
<reference key="4">
    <citation type="journal article" date="2003" name="Cell">
        <title>The Arabidopsis GNOM ARF-GEF mediates endosomal recycling, auxin transport, and auxin-dependent plant growth.</title>
        <authorList>
            <person name="Geldner N."/>
            <person name="Anders N."/>
            <person name="Wolters H."/>
            <person name="Keicher J."/>
            <person name="Kornberger W."/>
            <person name="Muller P."/>
            <person name="Delbarre A."/>
            <person name="Ueda T."/>
            <person name="Nakano A."/>
            <person name="Juergens G."/>
        </authorList>
    </citation>
    <scope>GENE FAMILY</scope>
</reference>
<reference key="5">
    <citation type="journal article" date="2004" name="Mol. Biol. Cell">
        <title>Phylogenetic analysis of Sec7-domain-containing Arf nucleotide exchangers.</title>
        <authorList>
            <person name="Cox R."/>
            <person name="Mason-Gamer R.J."/>
            <person name="Jackson C.L."/>
            <person name="Segev N."/>
        </authorList>
    </citation>
    <scope>GENE FAMILY</scope>
    <scope>NOMENCLATURE</scope>
</reference>
<reference key="6">
    <citation type="journal article" date="2007" name="Nature">
        <title>Functional diversification of closely related ARF-GEFs in protein secretion and recycling.</title>
        <authorList>
            <person name="Richter S."/>
            <person name="Geldner N."/>
            <person name="Schrader J."/>
            <person name="Wolters H."/>
            <person name="Stierhof Y.D."/>
            <person name="Rios G."/>
            <person name="Koncz C."/>
            <person name="Robinson D.G."/>
            <person name="Juergens G."/>
        </authorList>
    </citation>
    <scope>GENE FAMILY</scope>
</reference>
<gene>
    <name type="primary">BIG1</name>
    <name type="ordered locus">At4g38200</name>
    <name type="ORF">F20D10.320</name>
</gene>
<accession>F4JSZ5</accession>
<accession>Q0WUF1</accession>
<accession>Q9SZM0</accession>
<feature type="chain" id="PRO_0000420950" description="Brefeldin A-inhibited guanine nucleotide-exchange protein 1">
    <location>
        <begin position="1"/>
        <end position="1687"/>
    </location>
</feature>
<feature type="domain" description="SEC7" evidence="3">
    <location>
        <begin position="532"/>
        <end position="719"/>
    </location>
</feature>
<feature type="region of interest" description="Disordered" evidence="4">
    <location>
        <begin position="494"/>
        <end position="529"/>
    </location>
</feature>
<feature type="region of interest" description="Disordered" evidence="4">
    <location>
        <begin position="1229"/>
        <end position="1248"/>
    </location>
</feature>
<feature type="compositionally biased region" description="Basic and acidic residues" evidence="4">
    <location>
        <begin position="514"/>
        <end position="523"/>
    </location>
</feature>
<feature type="compositionally biased region" description="Polar residues" evidence="4">
    <location>
        <begin position="1232"/>
        <end position="1248"/>
    </location>
</feature>
<feature type="active site" evidence="2">
    <location>
        <position position="634"/>
    </location>
</feature>
<evidence type="ECO:0000250" key="1"/>
<evidence type="ECO:0000255" key="2"/>
<evidence type="ECO:0000255" key="3">
    <source>
        <dbReference type="PROSITE-ProRule" id="PRU00189"/>
    </source>
</evidence>
<evidence type="ECO:0000256" key="4">
    <source>
        <dbReference type="SAM" id="MobiDB-lite"/>
    </source>
</evidence>
<evidence type="ECO:0000305" key="5"/>
<name>BIG1_ARATH</name>
<organism>
    <name type="scientific">Arabidopsis thaliana</name>
    <name type="common">Mouse-ear cress</name>
    <dbReference type="NCBI Taxonomy" id="3702"/>
    <lineage>
        <taxon>Eukaryota</taxon>
        <taxon>Viridiplantae</taxon>
        <taxon>Streptophyta</taxon>
        <taxon>Embryophyta</taxon>
        <taxon>Tracheophyta</taxon>
        <taxon>Spermatophyta</taxon>
        <taxon>Magnoliopsida</taxon>
        <taxon>eudicotyledons</taxon>
        <taxon>Gunneridae</taxon>
        <taxon>Pentapetalae</taxon>
        <taxon>rosids</taxon>
        <taxon>malvids</taxon>
        <taxon>Brassicales</taxon>
        <taxon>Brassicaceae</taxon>
        <taxon>Camelineae</taxon>
        <taxon>Arabidopsis</taxon>
    </lineage>
</organism>